<comment type="function">
    <text evidence="1">Required for the formation of a threonylcarbamoyl group on adenosine at position 37 (t(6)A37) in tRNAs that read codons beginning with adenine. Catalyzes the conversion of L-threonine, HCO(3)(-)/CO(2) and ATP to give threonylcarbamoyl-AMP (TC-AMP) as the acyladenylate intermediate, with the release of diphosphate.</text>
</comment>
<comment type="catalytic activity">
    <reaction evidence="1">
        <text>L-threonine + hydrogencarbonate + ATP = L-threonylcarbamoyladenylate + diphosphate + H2O</text>
        <dbReference type="Rhea" id="RHEA:36407"/>
        <dbReference type="ChEBI" id="CHEBI:15377"/>
        <dbReference type="ChEBI" id="CHEBI:17544"/>
        <dbReference type="ChEBI" id="CHEBI:30616"/>
        <dbReference type="ChEBI" id="CHEBI:33019"/>
        <dbReference type="ChEBI" id="CHEBI:57926"/>
        <dbReference type="ChEBI" id="CHEBI:73682"/>
        <dbReference type="EC" id="2.7.7.87"/>
    </reaction>
</comment>
<comment type="subcellular location">
    <subcellularLocation>
        <location evidence="1">Cytoplasm</location>
    </subcellularLocation>
</comment>
<comment type="similarity">
    <text evidence="1">Belongs to the SUA5 family. TsaC subfamily.</text>
</comment>
<reference key="1">
    <citation type="submission" date="2008-01" db="EMBL/GenBank/DDBJ databases">
        <title>Complete sequence of Shewanella halifaxensis HAW-EB4.</title>
        <authorList>
            <consortium name="US DOE Joint Genome Institute"/>
            <person name="Copeland A."/>
            <person name="Lucas S."/>
            <person name="Lapidus A."/>
            <person name="Glavina del Rio T."/>
            <person name="Dalin E."/>
            <person name="Tice H."/>
            <person name="Bruce D."/>
            <person name="Goodwin L."/>
            <person name="Pitluck S."/>
            <person name="Sims D."/>
            <person name="Brettin T."/>
            <person name="Detter J.C."/>
            <person name="Han C."/>
            <person name="Kuske C.R."/>
            <person name="Schmutz J."/>
            <person name="Larimer F."/>
            <person name="Land M."/>
            <person name="Hauser L."/>
            <person name="Kyrpides N."/>
            <person name="Kim E."/>
            <person name="Zhao J.-S."/>
            <person name="Richardson P."/>
        </authorList>
    </citation>
    <scope>NUCLEOTIDE SEQUENCE [LARGE SCALE GENOMIC DNA]</scope>
    <source>
        <strain>HAW-EB4</strain>
    </source>
</reference>
<sequence>MLEVLPADVAELVEQGGVIAYPTEAVYGLGCDPDNDDAIERLLEIKLRPWQKGLILVAGDYQQLLPYIDESQLSAEQLAFVHSKWPGPFTFIMPVKPGLSNLLSGSFDSIAVRVTAHEGVKALCAAINKPIVSTSANLTGQDPALSGAAVKQQFEGIIAGLVIGDLGIQASPSTIIDAKSGQVIRKG</sequence>
<proteinExistence type="inferred from homology"/>
<name>TSAC_SHEHH</name>
<evidence type="ECO:0000255" key="1">
    <source>
        <dbReference type="HAMAP-Rule" id="MF_01852"/>
    </source>
</evidence>
<protein>
    <recommendedName>
        <fullName evidence="1">Threonylcarbamoyl-AMP synthase</fullName>
        <shortName evidence="1">TC-AMP synthase</shortName>
        <ecNumber evidence="1">2.7.7.87</ecNumber>
    </recommendedName>
    <alternativeName>
        <fullName evidence="1">L-threonylcarbamoyladenylate synthase</fullName>
    </alternativeName>
    <alternativeName>
        <fullName evidence="1">t(6)A37 threonylcarbamoyladenosine biosynthesis protein TsaC</fullName>
    </alternativeName>
    <alternativeName>
        <fullName evidence="1">tRNA threonylcarbamoyladenosine biosynthesis protein TsaC</fullName>
    </alternativeName>
</protein>
<keyword id="KW-0067">ATP-binding</keyword>
<keyword id="KW-0963">Cytoplasm</keyword>
<keyword id="KW-0547">Nucleotide-binding</keyword>
<keyword id="KW-0548">Nucleotidyltransferase</keyword>
<keyword id="KW-0808">Transferase</keyword>
<keyword id="KW-0819">tRNA processing</keyword>
<feature type="chain" id="PRO_0000352980" description="Threonylcarbamoyl-AMP synthase">
    <location>
        <begin position="1"/>
        <end position="187"/>
    </location>
</feature>
<feature type="domain" description="YrdC-like" evidence="1">
    <location>
        <begin position="3"/>
        <end position="187"/>
    </location>
</feature>
<gene>
    <name evidence="1" type="primary">tsaC</name>
    <name type="synonym">rimN</name>
    <name type="ordered locus">Shal_0033</name>
</gene>
<organism>
    <name type="scientific">Shewanella halifaxensis (strain HAW-EB4)</name>
    <dbReference type="NCBI Taxonomy" id="458817"/>
    <lineage>
        <taxon>Bacteria</taxon>
        <taxon>Pseudomonadati</taxon>
        <taxon>Pseudomonadota</taxon>
        <taxon>Gammaproteobacteria</taxon>
        <taxon>Alteromonadales</taxon>
        <taxon>Shewanellaceae</taxon>
        <taxon>Shewanella</taxon>
    </lineage>
</organism>
<dbReference type="EC" id="2.7.7.87" evidence="1"/>
<dbReference type="EMBL" id="CP000931">
    <property type="protein sequence ID" value="ABZ74609.1"/>
    <property type="molecule type" value="Genomic_DNA"/>
</dbReference>
<dbReference type="RefSeq" id="WP_012275167.1">
    <property type="nucleotide sequence ID" value="NC_010334.1"/>
</dbReference>
<dbReference type="SMR" id="B0TLD6"/>
<dbReference type="STRING" id="458817.Shal_0033"/>
<dbReference type="KEGG" id="shl:Shal_0033"/>
<dbReference type="eggNOG" id="COG0009">
    <property type="taxonomic scope" value="Bacteria"/>
</dbReference>
<dbReference type="HOGENOM" id="CLU_031397_6_0_6"/>
<dbReference type="OrthoDB" id="9814580at2"/>
<dbReference type="Proteomes" id="UP000001317">
    <property type="component" value="Chromosome"/>
</dbReference>
<dbReference type="GO" id="GO:0005737">
    <property type="term" value="C:cytoplasm"/>
    <property type="evidence" value="ECO:0007669"/>
    <property type="project" value="UniProtKB-SubCell"/>
</dbReference>
<dbReference type="GO" id="GO:0005524">
    <property type="term" value="F:ATP binding"/>
    <property type="evidence" value="ECO:0007669"/>
    <property type="project" value="UniProtKB-UniRule"/>
</dbReference>
<dbReference type="GO" id="GO:0003725">
    <property type="term" value="F:double-stranded RNA binding"/>
    <property type="evidence" value="ECO:0007669"/>
    <property type="project" value="InterPro"/>
</dbReference>
<dbReference type="GO" id="GO:0061710">
    <property type="term" value="F:L-threonylcarbamoyladenylate synthase"/>
    <property type="evidence" value="ECO:0007669"/>
    <property type="project" value="UniProtKB-EC"/>
</dbReference>
<dbReference type="GO" id="GO:0000049">
    <property type="term" value="F:tRNA binding"/>
    <property type="evidence" value="ECO:0007669"/>
    <property type="project" value="TreeGrafter"/>
</dbReference>
<dbReference type="GO" id="GO:0006450">
    <property type="term" value="P:regulation of translational fidelity"/>
    <property type="evidence" value="ECO:0007669"/>
    <property type="project" value="TreeGrafter"/>
</dbReference>
<dbReference type="GO" id="GO:0002949">
    <property type="term" value="P:tRNA threonylcarbamoyladenosine modification"/>
    <property type="evidence" value="ECO:0007669"/>
    <property type="project" value="UniProtKB-UniRule"/>
</dbReference>
<dbReference type="FunFam" id="3.90.870.10:FF:000004">
    <property type="entry name" value="Threonylcarbamoyl-AMP synthase"/>
    <property type="match status" value="1"/>
</dbReference>
<dbReference type="Gene3D" id="3.90.870.10">
    <property type="entry name" value="DHBP synthase"/>
    <property type="match status" value="1"/>
</dbReference>
<dbReference type="HAMAP" id="MF_01852">
    <property type="entry name" value="TsaC"/>
    <property type="match status" value="1"/>
</dbReference>
<dbReference type="InterPro" id="IPR017945">
    <property type="entry name" value="DHBP_synth_RibB-like_a/b_dom"/>
</dbReference>
<dbReference type="InterPro" id="IPR006070">
    <property type="entry name" value="Sua5-like_dom"/>
</dbReference>
<dbReference type="InterPro" id="IPR023535">
    <property type="entry name" value="TC-AMP_synthase"/>
</dbReference>
<dbReference type="InterPro" id="IPR050156">
    <property type="entry name" value="TC-AMP_synthase_SUA5"/>
</dbReference>
<dbReference type="NCBIfam" id="TIGR00057">
    <property type="entry name" value="L-threonylcarbamoyladenylate synthase"/>
    <property type="match status" value="1"/>
</dbReference>
<dbReference type="PANTHER" id="PTHR17490">
    <property type="entry name" value="SUA5"/>
    <property type="match status" value="1"/>
</dbReference>
<dbReference type="PANTHER" id="PTHR17490:SF18">
    <property type="entry name" value="THREONYLCARBAMOYL-AMP SYNTHASE"/>
    <property type="match status" value="1"/>
</dbReference>
<dbReference type="Pfam" id="PF01300">
    <property type="entry name" value="Sua5_yciO_yrdC"/>
    <property type="match status" value="1"/>
</dbReference>
<dbReference type="SUPFAM" id="SSF55821">
    <property type="entry name" value="YrdC/RibB"/>
    <property type="match status" value="1"/>
</dbReference>
<dbReference type="PROSITE" id="PS51163">
    <property type="entry name" value="YRDC"/>
    <property type="match status" value="1"/>
</dbReference>
<accession>B0TLD6</accession>